<organism>
    <name type="scientific">Bos taurus</name>
    <name type="common">Bovine</name>
    <dbReference type="NCBI Taxonomy" id="9913"/>
    <lineage>
        <taxon>Eukaryota</taxon>
        <taxon>Metazoa</taxon>
        <taxon>Chordata</taxon>
        <taxon>Craniata</taxon>
        <taxon>Vertebrata</taxon>
        <taxon>Euteleostomi</taxon>
        <taxon>Mammalia</taxon>
        <taxon>Eutheria</taxon>
        <taxon>Laurasiatheria</taxon>
        <taxon>Artiodactyla</taxon>
        <taxon>Ruminantia</taxon>
        <taxon>Pecora</taxon>
        <taxon>Bovidae</taxon>
        <taxon>Bovinae</taxon>
        <taxon>Bos</taxon>
    </lineage>
</organism>
<reference key="1">
    <citation type="submission" date="2004-01" db="EMBL/GenBank/DDBJ databases">
        <title>Analysis of gene expression in the bovine blastocyst or hatched blastocyst in vitro using ACP method.</title>
        <authorList>
            <person name="Shin M.L."/>
            <person name="Cui X.S."/>
            <person name="Park S.Y."/>
            <person name="Kim E.Y."/>
            <person name="Park S.P."/>
            <person name="Lee W.J."/>
            <person name="Hwang K.C."/>
            <person name="Kim N.H."/>
        </authorList>
    </citation>
    <scope>NUCLEOTIDE SEQUENCE [MRNA]</scope>
</reference>
<reference key="2">
    <citation type="submission" date="2007-06" db="EMBL/GenBank/DDBJ databases">
        <authorList>
            <consortium name="NIH - Mammalian Gene Collection (MGC) project"/>
        </authorList>
    </citation>
    <scope>NUCLEOTIDE SEQUENCE [LARGE SCALE MRNA]</scope>
    <source>
        <strain>Hereford</strain>
        <tissue>Fetal medulla</tissue>
        <tissue>Testis</tissue>
    </source>
</reference>
<evidence type="ECO:0000250" key="1">
    <source>
        <dbReference type="UniProtKB" id="P30050"/>
    </source>
</evidence>
<evidence type="ECO:0000305" key="2"/>
<feature type="chain" id="PRO_0000104454" description="Large ribosomal subunit protein uL11">
    <location>
        <begin position="1"/>
        <end position="165"/>
    </location>
</feature>
<feature type="modified residue" description="Phosphoserine" evidence="1">
    <location>
        <position position="38"/>
    </location>
</feature>
<feature type="modified residue" description="N6-acetyllysine" evidence="1">
    <location>
        <position position="54"/>
    </location>
</feature>
<feature type="modified residue" description="Phosphoserine" evidence="1">
    <location>
        <position position="165"/>
    </location>
</feature>
<feature type="cross-link" description="Glycyl lysine isopeptide (Lys-Gly) (interchain with G-Cter in SUMO2)" evidence="1">
    <location>
        <position position="40"/>
    </location>
</feature>
<feature type="cross-link" description="Glycyl lysine isopeptide (Lys-Gly) (interchain with G-Cter in ubiquitin)" evidence="1">
    <location>
        <position position="48"/>
    </location>
</feature>
<feature type="cross-link" description="Glycyl lysine isopeptide (Lys-Gly) (interchain with G-Cter in ubiquitin)" evidence="1">
    <location>
        <position position="83"/>
    </location>
</feature>
<gene>
    <name type="primary">RPL12</name>
</gene>
<keyword id="KW-0007">Acetylation</keyword>
<keyword id="KW-0963">Cytoplasm</keyword>
<keyword id="KW-1017">Isopeptide bond</keyword>
<keyword id="KW-0597">Phosphoprotein</keyword>
<keyword id="KW-1185">Reference proteome</keyword>
<keyword id="KW-0687">Ribonucleoprotein</keyword>
<keyword id="KW-0689">Ribosomal protein</keyword>
<keyword id="KW-0694">RNA-binding</keyword>
<keyword id="KW-0832">Ubl conjugation</keyword>
<protein>
    <recommendedName>
        <fullName evidence="2">Large ribosomal subunit protein uL11</fullName>
    </recommendedName>
    <alternativeName>
        <fullName>60S ribosomal protein L12</fullName>
    </alternativeName>
</protein>
<proteinExistence type="evidence at transcript level"/>
<dbReference type="EMBL" id="AY528249">
    <property type="protein sequence ID" value="AAS20597.1"/>
    <property type="molecule type" value="mRNA"/>
</dbReference>
<dbReference type="EMBL" id="BC102693">
    <property type="protein sequence ID" value="AAI02694.1"/>
    <property type="molecule type" value="mRNA"/>
</dbReference>
<dbReference type="EMBL" id="BC142032">
    <property type="protein sequence ID" value="AAI42033.1"/>
    <property type="molecule type" value="mRNA"/>
</dbReference>
<dbReference type="RefSeq" id="NP_991366.1">
    <property type="nucleotide sequence ID" value="NM_205797.1"/>
</dbReference>
<dbReference type="SMR" id="P61284"/>
<dbReference type="FunCoup" id="P61284">
    <property type="interactions" value="2124"/>
</dbReference>
<dbReference type="STRING" id="9913.ENSBTAP00000009152"/>
<dbReference type="PaxDb" id="9913-ENSBTAP00000009152"/>
<dbReference type="PeptideAtlas" id="P61284"/>
<dbReference type="Ensembl" id="ENSBTAT00000009152.3">
    <property type="protein sequence ID" value="ENSBTAP00000009152.2"/>
    <property type="gene ID" value="ENSBTAG00000006963.4"/>
</dbReference>
<dbReference type="GeneID" id="404133"/>
<dbReference type="KEGG" id="bta:404133"/>
<dbReference type="CTD" id="6136"/>
<dbReference type="VEuPathDB" id="HostDB:ENSBTAG00000006963"/>
<dbReference type="VEuPathDB" id="HostDB:ENSBTAG00000025385"/>
<dbReference type="eggNOG" id="KOG0886">
    <property type="taxonomic scope" value="Eukaryota"/>
</dbReference>
<dbReference type="GeneTree" id="ENSGT00390000006922"/>
<dbReference type="HOGENOM" id="CLU_074237_5_0_1"/>
<dbReference type="InParanoid" id="P61284"/>
<dbReference type="OMA" id="QPPHDVI"/>
<dbReference type="OrthoDB" id="9923786at2759"/>
<dbReference type="TreeFam" id="TF300123"/>
<dbReference type="Reactome" id="R-BTA-156827">
    <property type="pathway name" value="L13a-mediated translational silencing of Ceruloplasmin expression"/>
</dbReference>
<dbReference type="Reactome" id="R-BTA-1799339">
    <property type="pathway name" value="SRP-dependent cotranslational protein targeting to membrane"/>
</dbReference>
<dbReference type="Reactome" id="R-BTA-6791226">
    <property type="pathway name" value="Major pathway of rRNA processing in the nucleolus and cytosol"/>
</dbReference>
<dbReference type="Reactome" id="R-BTA-72689">
    <property type="pathway name" value="Formation of a pool of free 40S subunits"/>
</dbReference>
<dbReference type="Reactome" id="R-BTA-72706">
    <property type="pathway name" value="GTP hydrolysis and joining of the 60S ribosomal subunit"/>
</dbReference>
<dbReference type="Reactome" id="R-BTA-975956">
    <property type="pathway name" value="Nonsense Mediated Decay (NMD) independent of the Exon Junction Complex (EJC)"/>
</dbReference>
<dbReference type="Reactome" id="R-BTA-975957">
    <property type="pathway name" value="Nonsense Mediated Decay (NMD) enhanced by the Exon Junction Complex (EJC)"/>
</dbReference>
<dbReference type="CD-CODE" id="D7FE2080">
    <property type="entry name" value="Nucleolus"/>
</dbReference>
<dbReference type="Proteomes" id="UP000009136">
    <property type="component" value="Chromosome 11"/>
</dbReference>
<dbReference type="Bgee" id="ENSBTAG00000006963">
    <property type="expression patterns" value="Expressed in omasum and 103 other cell types or tissues"/>
</dbReference>
<dbReference type="GO" id="GO:0022625">
    <property type="term" value="C:cytosolic large ribosomal subunit"/>
    <property type="evidence" value="ECO:0000318"/>
    <property type="project" value="GO_Central"/>
</dbReference>
<dbReference type="GO" id="GO:0014069">
    <property type="term" value="C:postsynaptic density"/>
    <property type="evidence" value="ECO:0007669"/>
    <property type="project" value="Ensembl"/>
</dbReference>
<dbReference type="GO" id="GO:0070180">
    <property type="term" value="F:large ribosomal subunit rRNA binding"/>
    <property type="evidence" value="ECO:0000318"/>
    <property type="project" value="GO_Central"/>
</dbReference>
<dbReference type="GO" id="GO:0003735">
    <property type="term" value="F:structural constituent of ribosome"/>
    <property type="evidence" value="ECO:0000318"/>
    <property type="project" value="GO_Central"/>
</dbReference>
<dbReference type="GO" id="GO:0006412">
    <property type="term" value="P:translation"/>
    <property type="evidence" value="ECO:0000318"/>
    <property type="project" value="GO_Central"/>
</dbReference>
<dbReference type="CDD" id="cd00349">
    <property type="entry name" value="Ribosomal_L11"/>
    <property type="match status" value="1"/>
</dbReference>
<dbReference type="FunFam" id="1.10.10.250:FF:000002">
    <property type="entry name" value="60S ribosomal protein L12"/>
    <property type="match status" value="1"/>
</dbReference>
<dbReference type="FunFam" id="3.30.1550.10:FF:000002">
    <property type="entry name" value="60S ribosomal protein L12"/>
    <property type="match status" value="1"/>
</dbReference>
<dbReference type="Gene3D" id="1.10.10.250">
    <property type="entry name" value="Ribosomal protein L11, C-terminal domain"/>
    <property type="match status" value="1"/>
</dbReference>
<dbReference type="Gene3D" id="3.30.1550.10">
    <property type="entry name" value="Ribosomal protein L11/L12, N-terminal domain"/>
    <property type="match status" value="1"/>
</dbReference>
<dbReference type="HAMAP" id="MF_00736">
    <property type="entry name" value="Ribosomal_uL11"/>
    <property type="match status" value="1"/>
</dbReference>
<dbReference type="InterPro" id="IPR000911">
    <property type="entry name" value="Ribosomal_uL11"/>
</dbReference>
<dbReference type="InterPro" id="IPR020783">
    <property type="entry name" value="Ribosomal_uL11_C"/>
</dbReference>
<dbReference type="InterPro" id="IPR036769">
    <property type="entry name" value="Ribosomal_uL11_C_sf"/>
</dbReference>
<dbReference type="InterPro" id="IPR020785">
    <property type="entry name" value="Ribosomal_uL11_CS"/>
</dbReference>
<dbReference type="InterPro" id="IPR020784">
    <property type="entry name" value="Ribosomal_uL11_N"/>
</dbReference>
<dbReference type="InterPro" id="IPR036796">
    <property type="entry name" value="Ribosomal_uL11_N_sf"/>
</dbReference>
<dbReference type="PANTHER" id="PTHR11661">
    <property type="entry name" value="60S RIBOSOMAL PROTEIN L12"/>
    <property type="match status" value="1"/>
</dbReference>
<dbReference type="PANTHER" id="PTHR11661:SF2">
    <property type="entry name" value="LARGE RIBOSOMAL SUBUNIT PROTEIN UL11"/>
    <property type="match status" value="1"/>
</dbReference>
<dbReference type="Pfam" id="PF00298">
    <property type="entry name" value="Ribosomal_L11"/>
    <property type="match status" value="1"/>
</dbReference>
<dbReference type="Pfam" id="PF03946">
    <property type="entry name" value="Ribosomal_L11_N"/>
    <property type="match status" value="1"/>
</dbReference>
<dbReference type="SMART" id="SM00649">
    <property type="entry name" value="RL11"/>
    <property type="match status" value="1"/>
</dbReference>
<dbReference type="SUPFAM" id="SSF54747">
    <property type="entry name" value="Ribosomal L11/L12e N-terminal domain"/>
    <property type="match status" value="1"/>
</dbReference>
<dbReference type="SUPFAM" id="SSF46906">
    <property type="entry name" value="Ribosomal protein L11, C-terminal domain"/>
    <property type="match status" value="1"/>
</dbReference>
<dbReference type="PROSITE" id="PS00359">
    <property type="entry name" value="RIBOSOMAL_L11"/>
    <property type="match status" value="1"/>
</dbReference>
<name>RL12_BOVIN</name>
<sequence>MPPKFDPNEIKVVYLRCTGGEVGATSALAPKIGPLGLSPKKVGDDIAKATGDWKGLRITVKLTIQNRQAQIEVVPSASALIIKALKEPPRDRKKQKNIKHSGNITFDEIVNIARQMRHRSLARELSGTIKEILGTAQSVGCNVDGRHPHDIIDDINSGAVECPAS</sequence>
<accession>P61284</accession>
<accession>A5PJB1</accession>
<accession>Q3SZV1</accession>
<comment type="function">
    <text evidence="1">Component of the large ribosomal subunit. The ribosome is a large ribonucleoprotein complex responsible for the synthesis of proteins in the cell. Binds directly to 26S ribosomal RNA.</text>
</comment>
<comment type="subunit">
    <text evidence="1">Component of the large ribosomal subunit. Mature ribosomes consist of a small (40S) and a large (60S) subunit. The 40S subunit contains about 33 different proteins and 1 molecule of RNA (18S). The 60S subunit contains about 49 different proteins and 3 molecules of RNA (28S, 5.8S and 5S).</text>
</comment>
<comment type="subcellular location">
    <subcellularLocation>
        <location evidence="1">Cytoplasm</location>
    </subcellularLocation>
</comment>
<comment type="PTM">
    <text evidence="1">Ubiquitinated at Lys-48 and Lys-83 by RNF14 and RNF25 in response to ribosome collisions (ribosome stalling).</text>
</comment>
<comment type="similarity">
    <text evidence="2">Belongs to the universal ribosomal protein uL11 family.</text>
</comment>